<gene>
    <name type="primary">LXN</name>
</gene>
<reference key="1">
    <citation type="journal article" date="2000" name="Mol. Biol. Rep.">
        <title>Cloning, tissue expression pattern and genomic organization of latexin, a human homologue of rat carboxypeptidase A inhibitor.</title>
        <authorList>
            <person name="Liu Q."/>
            <person name="Yu L."/>
            <person name="Gao J."/>
            <person name="Fu Q."/>
            <person name="Zhang J."/>
            <person name="Zhang P."/>
            <person name="Chen J."/>
            <person name="Zhao S."/>
        </authorList>
    </citation>
    <scope>NUCLEOTIDE SEQUENCE [GENOMIC DNA / MRNA]</scope>
    <scope>VARIANT ARG-53</scope>
    <scope>TISSUE SPECIFICITY</scope>
    <source>
        <tissue>Fetal brain</tissue>
    </source>
</reference>
<reference key="2">
    <citation type="submission" date="2000-06" db="EMBL/GenBank/DDBJ databases">
        <title>1G10 and gastric cancer.</title>
        <authorList>
            <person name="Ke Y."/>
            <person name="Ning T."/>
            <person name="Lu Z."/>
            <person name="Guo M."/>
            <person name="Zhao H."/>
        </authorList>
    </citation>
    <scope>NUCLEOTIDE SEQUENCE [MRNA]</scope>
</reference>
<reference key="3">
    <citation type="journal article" date="2006" name="Nature">
        <title>The DNA sequence, annotation and analysis of human chromosome 3.</title>
        <authorList>
            <person name="Muzny D.M."/>
            <person name="Scherer S.E."/>
            <person name="Kaul R."/>
            <person name="Wang J."/>
            <person name="Yu J."/>
            <person name="Sudbrak R."/>
            <person name="Buhay C.J."/>
            <person name="Chen R."/>
            <person name="Cree A."/>
            <person name="Ding Y."/>
            <person name="Dugan-Rocha S."/>
            <person name="Gill R."/>
            <person name="Gunaratne P."/>
            <person name="Harris R.A."/>
            <person name="Hawes A.C."/>
            <person name="Hernandez J."/>
            <person name="Hodgson A.V."/>
            <person name="Hume J."/>
            <person name="Jackson A."/>
            <person name="Khan Z.M."/>
            <person name="Kovar-Smith C."/>
            <person name="Lewis L.R."/>
            <person name="Lozado R.J."/>
            <person name="Metzker M.L."/>
            <person name="Milosavljevic A."/>
            <person name="Miner G.R."/>
            <person name="Morgan M.B."/>
            <person name="Nazareth L.V."/>
            <person name="Scott G."/>
            <person name="Sodergren E."/>
            <person name="Song X.-Z."/>
            <person name="Steffen D."/>
            <person name="Wei S."/>
            <person name="Wheeler D.A."/>
            <person name="Wright M.W."/>
            <person name="Worley K.C."/>
            <person name="Yuan Y."/>
            <person name="Zhang Z."/>
            <person name="Adams C.Q."/>
            <person name="Ansari-Lari M.A."/>
            <person name="Ayele M."/>
            <person name="Brown M.J."/>
            <person name="Chen G."/>
            <person name="Chen Z."/>
            <person name="Clendenning J."/>
            <person name="Clerc-Blankenburg K.P."/>
            <person name="Chen R."/>
            <person name="Chen Z."/>
            <person name="Davis C."/>
            <person name="Delgado O."/>
            <person name="Dinh H.H."/>
            <person name="Dong W."/>
            <person name="Draper H."/>
            <person name="Ernst S."/>
            <person name="Fu G."/>
            <person name="Gonzalez-Garay M.L."/>
            <person name="Garcia D.K."/>
            <person name="Gillett W."/>
            <person name="Gu J."/>
            <person name="Hao B."/>
            <person name="Haugen E."/>
            <person name="Havlak P."/>
            <person name="He X."/>
            <person name="Hennig S."/>
            <person name="Hu S."/>
            <person name="Huang W."/>
            <person name="Jackson L.R."/>
            <person name="Jacob L.S."/>
            <person name="Kelly S.H."/>
            <person name="Kube M."/>
            <person name="Levy R."/>
            <person name="Li Z."/>
            <person name="Liu B."/>
            <person name="Liu J."/>
            <person name="Liu W."/>
            <person name="Lu J."/>
            <person name="Maheshwari M."/>
            <person name="Nguyen B.-V."/>
            <person name="Okwuonu G.O."/>
            <person name="Palmeiri A."/>
            <person name="Pasternak S."/>
            <person name="Perez L.M."/>
            <person name="Phelps K.A."/>
            <person name="Plopper F.J."/>
            <person name="Qiang B."/>
            <person name="Raymond C."/>
            <person name="Rodriguez R."/>
            <person name="Saenphimmachak C."/>
            <person name="Santibanez J."/>
            <person name="Shen H."/>
            <person name="Shen Y."/>
            <person name="Subramanian S."/>
            <person name="Tabor P.E."/>
            <person name="Verduzco D."/>
            <person name="Waldron L."/>
            <person name="Wang J."/>
            <person name="Wang J."/>
            <person name="Wang Q."/>
            <person name="Williams G.A."/>
            <person name="Wong G.K.-S."/>
            <person name="Yao Z."/>
            <person name="Zhang J."/>
            <person name="Zhang X."/>
            <person name="Zhao G."/>
            <person name="Zhou J."/>
            <person name="Zhou Y."/>
            <person name="Nelson D."/>
            <person name="Lehrach H."/>
            <person name="Reinhardt R."/>
            <person name="Naylor S.L."/>
            <person name="Yang H."/>
            <person name="Olson M."/>
            <person name="Weinstock G."/>
            <person name="Gibbs R.A."/>
        </authorList>
    </citation>
    <scope>NUCLEOTIDE SEQUENCE [LARGE SCALE GENOMIC DNA]</scope>
</reference>
<reference key="4">
    <citation type="journal article" date="2004" name="Genome Res.">
        <title>The status, quality, and expansion of the NIH full-length cDNA project: the Mammalian Gene Collection (MGC).</title>
        <authorList>
            <consortium name="The MGC Project Team"/>
        </authorList>
    </citation>
    <scope>NUCLEOTIDE SEQUENCE [LARGE SCALE MRNA]</scope>
    <source>
        <tissue>Skin</tissue>
        <tissue>Urinary bladder</tissue>
    </source>
</reference>
<reference key="5">
    <citation type="journal article" date="2009" name="Anal. Chem.">
        <title>Lys-N and trypsin cover complementary parts of the phosphoproteome in a refined SCX-based approach.</title>
        <authorList>
            <person name="Gauci S."/>
            <person name="Helbig A.O."/>
            <person name="Slijper M."/>
            <person name="Krijgsveld J."/>
            <person name="Heck A.J."/>
            <person name="Mohammed S."/>
        </authorList>
    </citation>
    <scope>ACETYLATION [LARGE SCALE ANALYSIS] AT LYS-55</scope>
    <scope>IDENTIFICATION BY MASS SPECTROMETRY [LARGE SCALE ANALYSIS]</scope>
</reference>
<reference key="6">
    <citation type="journal article" date="2011" name="BMC Syst. Biol.">
        <title>Initial characterization of the human central proteome.</title>
        <authorList>
            <person name="Burkard T.R."/>
            <person name="Planyavsky M."/>
            <person name="Kaupe I."/>
            <person name="Breitwieser F.P."/>
            <person name="Buerckstuemmer T."/>
            <person name="Bennett K.L."/>
            <person name="Superti-Furga G."/>
            <person name="Colinge J."/>
        </authorList>
    </citation>
    <scope>IDENTIFICATION BY MASS SPECTROMETRY [LARGE SCALE ANALYSIS]</scope>
</reference>
<reference key="7">
    <citation type="journal article" date="2005" name="Proc. Natl. Acad. Sci. U.S.A.">
        <title>Structure of human carboxypeptidase A4 with its endogenous protein inhibitor, latexin.</title>
        <authorList>
            <person name="Pallares I."/>
            <person name="Bonet R."/>
            <person name="Garcia-Castellanos R."/>
            <person name="Ventura S."/>
            <person name="Aviles F.X."/>
            <person name="Vendrell J."/>
            <person name="Gomis-Rueth F.-X."/>
        </authorList>
    </citation>
    <scope>X-RAY CRYSTALLOGRAPHY (1.6 ANGSTROMS) IN COMPLEX WITH CPA4</scope>
    <scope>FUNCTION</scope>
</reference>
<name>LXN_HUMAN</name>
<feature type="chain" id="PRO_0000191343" description="Latexin">
    <location>
        <begin position="1"/>
        <end position="222"/>
    </location>
</feature>
<feature type="domain" description="Cystatin LXN-type 1" evidence="2">
    <location>
        <begin position="1"/>
        <end position="97"/>
    </location>
</feature>
<feature type="domain" description="Cystatin LXN-type 2" evidence="2">
    <location>
        <begin position="118"/>
        <end position="222"/>
    </location>
</feature>
<feature type="region of interest" description="Alpha-helical linker" evidence="1">
    <location>
        <begin position="98"/>
        <end position="117"/>
    </location>
</feature>
<feature type="modified residue" description="N6-acetyllysine" evidence="6">
    <location>
        <position position="55"/>
    </location>
</feature>
<feature type="sequence variant" id="VAR_019117" description="In dbSNP:rs8455." evidence="3">
    <original>H</original>
    <variation>R</variation>
    <location>
        <position position="53"/>
    </location>
</feature>
<feature type="sequence variant" id="VAR_062139" description="In dbSNP:rs59718588.">
    <original>T</original>
    <variation>M</variation>
    <location>
        <position position="134"/>
    </location>
</feature>
<feature type="helix" evidence="7">
    <location>
        <begin position="8"/>
        <end position="25"/>
    </location>
</feature>
<feature type="strand" evidence="7">
    <location>
        <begin position="32"/>
        <end position="45"/>
    </location>
</feature>
<feature type="turn" evidence="7">
    <location>
        <begin position="46"/>
        <end position="48"/>
    </location>
</feature>
<feature type="strand" evidence="7">
    <location>
        <begin position="49"/>
        <end position="60"/>
    </location>
</feature>
<feature type="turn" evidence="7">
    <location>
        <begin position="61"/>
        <end position="63"/>
    </location>
</feature>
<feature type="strand" evidence="7">
    <location>
        <begin position="67"/>
        <end position="77"/>
    </location>
</feature>
<feature type="strand" evidence="7">
    <location>
        <begin position="86"/>
        <end position="93"/>
    </location>
</feature>
<feature type="helix" evidence="7">
    <location>
        <begin position="100"/>
        <end position="112"/>
    </location>
</feature>
<feature type="strand" evidence="7">
    <location>
        <begin position="118"/>
        <end position="123"/>
    </location>
</feature>
<feature type="helix" evidence="7">
    <location>
        <begin position="131"/>
        <end position="151"/>
    </location>
</feature>
<feature type="strand" evidence="7">
    <location>
        <begin position="158"/>
        <end position="169"/>
    </location>
</feature>
<feature type="strand" evidence="7">
    <location>
        <begin position="172"/>
        <end position="174"/>
    </location>
</feature>
<feature type="strand" evidence="7">
    <location>
        <begin position="176"/>
        <end position="186"/>
    </location>
</feature>
<feature type="turn" evidence="7">
    <location>
        <begin position="187"/>
        <end position="189"/>
    </location>
</feature>
<feature type="strand" evidence="7">
    <location>
        <begin position="192"/>
        <end position="202"/>
    </location>
</feature>
<feature type="turn" evidence="7">
    <location>
        <begin position="203"/>
        <end position="205"/>
    </location>
</feature>
<feature type="strand" evidence="7">
    <location>
        <begin position="206"/>
        <end position="214"/>
    </location>
</feature>
<evidence type="ECO:0000250" key="1"/>
<evidence type="ECO:0000255" key="2">
    <source>
        <dbReference type="PROSITE-ProRule" id="PRU01377"/>
    </source>
</evidence>
<evidence type="ECO:0000269" key="3">
    <source>
    </source>
</evidence>
<evidence type="ECO:0000269" key="4">
    <source>
    </source>
</evidence>
<evidence type="ECO:0000305" key="5"/>
<evidence type="ECO:0007744" key="6">
    <source>
    </source>
</evidence>
<evidence type="ECO:0007829" key="7">
    <source>
        <dbReference type="PDB" id="2BO9"/>
    </source>
</evidence>
<accession>Q9BS40</accession>
<accession>Q96PN2</accession>
<accession>Q9NQS6</accession>
<comment type="function">
    <text evidence="4">Hardly reversible, non-competitive, and potent inhibitor of CPA1, CPA2 and CPA4. May play a role in inflammation.</text>
</comment>
<comment type="interaction">
    <interactant intactId="EBI-1044504">
        <id>Q9BS40</id>
    </interactant>
    <interactant intactId="EBI-12208129">
        <id>Q96DN7</id>
        <label>BOC</label>
    </interactant>
    <organismsDiffer>false</organismsDiffer>
    <experiments>3</experiments>
</comment>
<comment type="interaction">
    <interactant intactId="EBI-1044504">
        <id>Q9BS40</id>
    </interactant>
    <interactant intactId="EBI-12208965">
        <id>P07451</id>
        <label>CA3</label>
    </interactant>
    <organismsDiffer>false</organismsDiffer>
    <experiments>3</experiments>
</comment>
<comment type="interaction">
    <interactant intactId="EBI-1044504">
        <id>Q9BS40</id>
    </interactant>
    <interactant intactId="EBI-2115950">
        <id>P12074</id>
        <label>COX6A1</label>
    </interactant>
    <organismsDiffer>false</organismsDiffer>
    <experiments>3</experiments>
</comment>
<comment type="interaction">
    <interactant intactId="EBI-1044504">
        <id>Q9BS40</id>
    </interactant>
    <interactant intactId="EBI-2680384">
        <id>Q9BQA9</id>
        <label>CYBC1</label>
    </interactant>
    <organismsDiffer>false</organismsDiffer>
    <experiments>3</experiments>
</comment>
<comment type="interaction">
    <interactant intactId="EBI-1044504">
        <id>Q9BS40</id>
    </interactant>
    <interactant intactId="EBI-1055336">
        <id>Q9NVH1</id>
        <label>DNAJC11</label>
    </interactant>
    <organismsDiffer>false</organismsDiffer>
    <experiments>3</experiments>
</comment>
<comment type="interaction">
    <interactant intactId="EBI-1044504">
        <id>Q9BS40</id>
    </interactant>
    <interactant intactId="EBI-2839838">
        <id>Q12882</id>
        <label>DPYD</label>
    </interactant>
    <organismsDiffer>false</organismsDiffer>
    <experiments>3</experiments>
</comment>
<comment type="interaction">
    <interactant intactId="EBI-1044504">
        <id>Q9BS40</id>
    </interactant>
    <interactant intactId="EBI-17709451">
        <id>A0A1W2PQB1</id>
        <label>FCGR3A</label>
    </interactant>
    <organismsDiffer>false</organismsDiffer>
    <experiments>3</experiments>
</comment>
<comment type="interaction">
    <interactant intactId="EBI-1044504">
        <id>Q9BS40</id>
    </interactant>
    <interactant intactId="EBI-10297401">
        <id>Q6UXU4</id>
        <label>GSG1L</label>
    </interactant>
    <organismsDiffer>false</organismsDiffer>
    <experiments>3</experiments>
</comment>
<comment type="interaction">
    <interactant intactId="EBI-1044504">
        <id>Q9BS40</id>
    </interactant>
    <interactant intactId="EBI-12178037">
        <id>Q5DX21-2</id>
        <label>IGSF11</label>
    </interactant>
    <organismsDiffer>false</organismsDiffer>
    <experiments>3</experiments>
</comment>
<comment type="interaction">
    <interactant intactId="EBI-1044504">
        <id>Q9BS40</id>
    </interactant>
    <interactant intactId="EBI-10182930">
        <id>P43361</id>
        <label>MAGEA8</label>
    </interactant>
    <organismsDiffer>false</organismsDiffer>
    <experiments>3</experiments>
</comment>
<comment type="interaction">
    <interactant intactId="EBI-1044504">
        <id>Q9BS40</id>
    </interactant>
    <interactant intactId="EBI-14506480">
        <id>Q4G0Z9</id>
        <label>MCMDC2</label>
    </interactant>
    <organismsDiffer>false</organismsDiffer>
    <experiments>3</experiments>
</comment>
<comment type="interaction">
    <interactant intactId="EBI-1044504">
        <id>Q9BS40</id>
    </interactant>
    <interactant intactId="EBI-12028784">
        <id>Q6X4W1-2</id>
        <label>NSMF</label>
    </interactant>
    <organismsDiffer>false</organismsDiffer>
    <experiments>3</experiments>
</comment>
<comment type="interaction">
    <interactant intactId="EBI-1044504">
        <id>Q9BS40</id>
    </interactant>
    <interactant intactId="EBI-747278">
        <id>P26367</id>
        <label>PAX6</label>
    </interactant>
    <organismsDiffer>false</organismsDiffer>
    <experiments>3</experiments>
</comment>
<comment type="interaction">
    <interactant intactId="EBI-1044504">
        <id>Q9BS40</id>
    </interactant>
    <interactant intactId="EBI-2506727">
        <id>Q9UQK1</id>
        <label>PPP1R3C</label>
    </interactant>
    <organismsDiffer>false</organismsDiffer>
    <experiments>3</experiments>
</comment>
<comment type="interaction">
    <interactant intactId="EBI-1044504">
        <id>Q9BS40</id>
    </interactant>
    <interactant intactId="EBI-2340927">
        <id>P78317</id>
        <label>RNF4</label>
    </interactant>
    <organismsDiffer>false</organismsDiffer>
    <experiments>3</experiments>
</comment>
<comment type="interaction">
    <interactant intactId="EBI-1044504">
        <id>Q9BS40</id>
    </interactant>
    <interactant intactId="EBI-724292">
        <id>Q8TBC3</id>
        <label>SHKBP1</label>
    </interactant>
    <organismsDiffer>false</organismsDiffer>
    <experiments>3</experiments>
</comment>
<comment type="interaction">
    <interactant intactId="EBI-1044504">
        <id>Q9BS40</id>
    </interactant>
    <interactant intactId="EBI-348464">
        <id>O75391</id>
        <label>SPAG7</label>
    </interactant>
    <organismsDiffer>false</organismsDiffer>
    <experiments>3</experiments>
</comment>
<comment type="interaction">
    <interactant intactId="EBI-1044504">
        <id>Q9BS40</id>
    </interactant>
    <interactant intactId="EBI-2800360">
        <id>Q9Y6G1</id>
        <label>TMEM14A</label>
    </interactant>
    <organismsDiffer>false</organismsDiffer>
    <experiments>3</experiments>
</comment>
<comment type="interaction">
    <interactant intactId="EBI-1044504">
        <id>Q9BS40</id>
    </interactant>
    <interactant intactId="EBI-1756205">
        <id>Q9BWF2</id>
        <label>TRAIP</label>
    </interactant>
    <organismsDiffer>false</organismsDiffer>
    <experiments>3</experiments>
</comment>
<comment type="interaction">
    <interactant intactId="EBI-1044504">
        <id>Q9BS40</id>
    </interactant>
    <interactant intactId="EBI-739510">
        <id>Q9HCM9</id>
        <label>TRIM39</label>
    </interactant>
    <organismsDiffer>false</organismsDiffer>
    <experiments>3</experiments>
</comment>
<comment type="interaction">
    <interactant intactId="EBI-1044504">
        <id>Q9BS40</id>
    </interactant>
    <interactant intactId="EBI-12158885">
        <id>Q5BJH7-5</id>
        <label>YIF1B</label>
    </interactant>
    <organismsDiffer>false</organismsDiffer>
    <experiments>3</experiments>
</comment>
<comment type="interaction">
    <interactant intactId="EBI-1044504">
        <id>Q9BS40</id>
    </interactant>
    <interactant intactId="EBI-746345">
        <id>Q9NP64</id>
        <label>ZCCHC17</label>
    </interactant>
    <organismsDiffer>false</organismsDiffer>
    <experiments>3</experiments>
</comment>
<comment type="interaction">
    <interactant intactId="EBI-1044504">
        <id>Q9BS40</id>
    </interactant>
    <interactant intactId="EBI-2818641">
        <id>Q969J2</id>
        <label>ZKSCAN4</label>
    </interactant>
    <organismsDiffer>false</organismsDiffer>
    <experiments>6</experiments>
</comment>
<comment type="interaction">
    <interactant intactId="EBI-1044504">
        <id>Q9BS40</id>
    </interactant>
    <interactant intactId="EBI-12298837">
        <id>Q2NKJ9</id>
        <label>ZNF430</label>
    </interactant>
    <organismsDiffer>false</organismsDiffer>
    <experiments>3</experiments>
</comment>
<comment type="interaction">
    <interactant intactId="EBI-1044504">
        <id>Q9BS40</id>
    </interactant>
    <interactant intactId="EBI-745567">
        <id>Q8IYX0</id>
        <label>ZNF679</label>
    </interactant>
    <organismsDiffer>false</organismsDiffer>
    <experiments>3</experiments>
</comment>
<comment type="subcellular location">
    <subcellularLocation>
        <location evidence="5">Cytoplasm</location>
    </subcellularLocation>
</comment>
<comment type="tissue specificity">
    <text evidence="3">Highly expressed in heart, prostate, ovary, kidney, pancreas, and colon, moderate or low in other tissues including brain.</text>
</comment>
<comment type="similarity">
    <text evidence="5">Belongs to the protease inhibitor I47 (latexin) family.</text>
</comment>
<dbReference type="EMBL" id="AF087851">
    <property type="protein sequence ID" value="AAP97162.1"/>
    <property type="molecule type" value="mRNA"/>
</dbReference>
<dbReference type="EMBL" id="AF282626">
    <property type="protein sequence ID" value="AAF82807.1"/>
    <property type="molecule type" value="mRNA"/>
</dbReference>
<dbReference type="EMBL" id="AF303587">
    <property type="protein sequence ID" value="AAL09331.1"/>
    <property type="molecule type" value="Genomic_DNA"/>
</dbReference>
<dbReference type="EMBL" id="AF282594">
    <property type="protein sequence ID" value="AAK69518.1"/>
    <property type="molecule type" value="mRNA"/>
</dbReference>
<dbReference type="EMBL" id="AC025033">
    <property type="status" value="NOT_ANNOTATED_CDS"/>
    <property type="molecule type" value="Genomic_DNA"/>
</dbReference>
<dbReference type="EMBL" id="AC080013">
    <property type="status" value="NOT_ANNOTATED_CDS"/>
    <property type="molecule type" value="Genomic_DNA"/>
</dbReference>
<dbReference type="EMBL" id="BC005346">
    <property type="protein sequence ID" value="AAH05346.1"/>
    <property type="molecule type" value="mRNA"/>
</dbReference>
<dbReference type="EMBL" id="BC008438">
    <property type="protein sequence ID" value="AAH08438.1"/>
    <property type="molecule type" value="mRNA"/>
</dbReference>
<dbReference type="CCDS" id="CCDS3183.1"/>
<dbReference type="RefSeq" id="NP_064554.3">
    <property type="nucleotide sequence ID" value="NM_020169.3"/>
</dbReference>
<dbReference type="PDB" id="2BO9">
    <property type="method" value="X-ray"/>
    <property type="resolution" value="1.60 A"/>
    <property type="chains" value="B/D=1-222"/>
</dbReference>
<dbReference type="PDBsum" id="2BO9"/>
<dbReference type="SMR" id="Q9BS40"/>
<dbReference type="BioGRID" id="121252">
    <property type="interactions" value="39"/>
</dbReference>
<dbReference type="FunCoup" id="Q9BS40">
    <property type="interactions" value="284"/>
</dbReference>
<dbReference type="IntAct" id="Q9BS40">
    <property type="interactions" value="27"/>
</dbReference>
<dbReference type="STRING" id="9606.ENSP00000264265"/>
<dbReference type="MEROPS" id="I47.001"/>
<dbReference type="GlyGen" id="Q9BS40">
    <property type="glycosylation" value="4 sites, 1 O-linked glycan (1 site)"/>
</dbReference>
<dbReference type="iPTMnet" id="Q9BS40"/>
<dbReference type="MetOSite" id="Q9BS40"/>
<dbReference type="PhosphoSitePlus" id="Q9BS40"/>
<dbReference type="SwissPalm" id="Q9BS40"/>
<dbReference type="BioMuta" id="LXN"/>
<dbReference type="DMDM" id="146345452"/>
<dbReference type="jPOST" id="Q9BS40"/>
<dbReference type="MassIVE" id="Q9BS40"/>
<dbReference type="PaxDb" id="9606-ENSP00000264265"/>
<dbReference type="PeptideAtlas" id="Q9BS40"/>
<dbReference type="ProteomicsDB" id="78864"/>
<dbReference type="Pumba" id="Q9BS40"/>
<dbReference type="Antibodypedia" id="2121">
    <property type="antibodies" value="646 antibodies from 35 providers"/>
</dbReference>
<dbReference type="DNASU" id="56925"/>
<dbReference type="Ensembl" id="ENST00000264265.4">
    <property type="protein sequence ID" value="ENSP00000264265.3"/>
    <property type="gene ID" value="ENSG00000079257.8"/>
</dbReference>
<dbReference type="GeneID" id="56925"/>
<dbReference type="KEGG" id="hsa:56925"/>
<dbReference type="MANE-Select" id="ENST00000264265.4">
    <property type="protein sequence ID" value="ENSP00000264265.3"/>
    <property type="RefSeq nucleotide sequence ID" value="NM_020169.4"/>
    <property type="RefSeq protein sequence ID" value="NP_064554.3"/>
</dbReference>
<dbReference type="UCSC" id="uc003fch.3">
    <property type="organism name" value="human"/>
</dbReference>
<dbReference type="AGR" id="HGNC:13347"/>
<dbReference type="CTD" id="56925"/>
<dbReference type="DisGeNET" id="56925"/>
<dbReference type="GeneCards" id="LXN"/>
<dbReference type="HGNC" id="HGNC:13347">
    <property type="gene designation" value="LXN"/>
</dbReference>
<dbReference type="HPA" id="ENSG00000079257">
    <property type="expression patterns" value="Low tissue specificity"/>
</dbReference>
<dbReference type="MIM" id="609305">
    <property type="type" value="gene"/>
</dbReference>
<dbReference type="neXtProt" id="NX_Q9BS40"/>
<dbReference type="OpenTargets" id="ENSG00000079257"/>
<dbReference type="PharmGKB" id="PA134991999"/>
<dbReference type="VEuPathDB" id="HostDB:ENSG00000079257"/>
<dbReference type="eggNOG" id="ENOG502RYUY">
    <property type="taxonomic scope" value="Eukaryota"/>
</dbReference>
<dbReference type="GeneTree" id="ENSGT00530000063813"/>
<dbReference type="HOGENOM" id="CLU_083048_0_0_1"/>
<dbReference type="InParanoid" id="Q9BS40"/>
<dbReference type="OMA" id="MWQNSTE"/>
<dbReference type="OrthoDB" id="8898327at2759"/>
<dbReference type="PAN-GO" id="Q9BS40">
    <property type="GO annotations" value="2 GO annotations based on evolutionary models"/>
</dbReference>
<dbReference type="PhylomeDB" id="Q9BS40"/>
<dbReference type="TreeFam" id="TF332787"/>
<dbReference type="PathwayCommons" id="Q9BS40"/>
<dbReference type="SignaLink" id="Q9BS40"/>
<dbReference type="BioGRID-ORCS" id="56925">
    <property type="hits" value="10 hits in 1142 CRISPR screens"/>
</dbReference>
<dbReference type="ChiTaRS" id="LXN">
    <property type="organism name" value="human"/>
</dbReference>
<dbReference type="EvolutionaryTrace" id="Q9BS40"/>
<dbReference type="GenomeRNAi" id="56925"/>
<dbReference type="Pharos" id="Q9BS40">
    <property type="development level" value="Tbio"/>
</dbReference>
<dbReference type="PRO" id="PR:Q9BS40"/>
<dbReference type="Proteomes" id="UP000005640">
    <property type="component" value="Chromosome 3"/>
</dbReference>
<dbReference type="RNAct" id="Q9BS40">
    <property type="molecule type" value="protein"/>
</dbReference>
<dbReference type="Bgee" id="ENSG00000079257">
    <property type="expression patterns" value="Expressed in germinal epithelium of ovary and 179 other cell types or tissues"/>
</dbReference>
<dbReference type="ExpressionAtlas" id="Q9BS40">
    <property type="expression patterns" value="baseline and differential"/>
</dbReference>
<dbReference type="GO" id="GO:0005737">
    <property type="term" value="C:cytoplasm"/>
    <property type="evidence" value="ECO:0007669"/>
    <property type="project" value="UniProtKB-SubCell"/>
</dbReference>
<dbReference type="GO" id="GO:0005615">
    <property type="term" value="C:extracellular space"/>
    <property type="evidence" value="ECO:0000318"/>
    <property type="project" value="GO_Central"/>
</dbReference>
<dbReference type="GO" id="GO:0008201">
    <property type="term" value="F:heparin binding"/>
    <property type="evidence" value="ECO:0007669"/>
    <property type="project" value="UniProtKB-KW"/>
</dbReference>
<dbReference type="GO" id="GO:0008191">
    <property type="term" value="F:metalloendopeptidase inhibitor activity"/>
    <property type="evidence" value="ECO:0000318"/>
    <property type="project" value="GO_Central"/>
</dbReference>
<dbReference type="GO" id="GO:0050965">
    <property type="term" value="P:detection of temperature stimulus involved in sensory perception of pain"/>
    <property type="evidence" value="ECO:0007669"/>
    <property type="project" value="Ensembl"/>
</dbReference>
<dbReference type="GO" id="GO:0006954">
    <property type="term" value="P:inflammatory response"/>
    <property type="evidence" value="ECO:0007669"/>
    <property type="project" value="UniProtKB-KW"/>
</dbReference>
<dbReference type="FunFam" id="3.10.450.10:FF:000006">
    <property type="entry name" value="latexin"/>
    <property type="match status" value="1"/>
</dbReference>
<dbReference type="FunFam" id="3.10.450.10:FF:000007">
    <property type="entry name" value="latexin"/>
    <property type="match status" value="1"/>
</dbReference>
<dbReference type="Gene3D" id="3.10.450.10">
    <property type="match status" value="2"/>
</dbReference>
<dbReference type="InterPro" id="IPR049897">
    <property type="entry name" value="CYSTATIN_LXN"/>
</dbReference>
<dbReference type="InterPro" id="IPR046350">
    <property type="entry name" value="Cystatin_sf"/>
</dbReference>
<dbReference type="InterPro" id="IPR009684">
    <property type="entry name" value="Latexin"/>
</dbReference>
<dbReference type="PANTHER" id="PTHR28591">
    <property type="entry name" value="LATEXIN"/>
    <property type="match status" value="1"/>
</dbReference>
<dbReference type="PANTHER" id="PTHR28591:SF1">
    <property type="entry name" value="LATEXIN"/>
    <property type="match status" value="1"/>
</dbReference>
<dbReference type="Pfam" id="PF06907">
    <property type="entry name" value="LXN"/>
    <property type="match status" value="1"/>
</dbReference>
<dbReference type="PIRSF" id="PIRSF011132">
    <property type="entry name" value="Prot_inh_latexin"/>
    <property type="match status" value="1"/>
</dbReference>
<dbReference type="SUPFAM" id="SSF54403">
    <property type="entry name" value="Cystatin/monellin"/>
    <property type="match status" value="2"/>
</dbReference>
<dbReference type="PROSITE" id="PS52033">
    <property type="entry name" value="CYSTATIN_LXN"/>
    <property type="match status" value="2"/>
</dbReference>
<sequence>MEIPPTNYPASRAALVAQNYINYQQGTPHRVFEVQKVKQASMEDIPGRGHKYHLKFAVEEIIQKQVKVNCTAEVLYPSTGQETAPEVNFTFEGETGKNPDEEDNTFYQRLKSMKEPLEAQNIPDNFGNVSPEMTLVLHLAWVACGYIIWQNSTEDTWYKMVKIQTVKQVQRNDDFIELDYTILLHNIASQEIIPWQMQVLWHPQYGTKVKHNSRLPKEVQLE</sequence>
<proteinExistence type="evidence at protein level"/>
<organism>
    <name type="scientific">Homo sapiens</name>
    <name type="common">Human</name>
    <dbReference type="NCBI Taxonomy" id="9606"/>
    <lineage>
        <taxon>Eukaryota</taxon>
        <taxon>Metazoa</taxon>
        <taxon>Chordata</taxon>
        <taxon>Craniata</taxon>
        <taxon>Vertebrata</taxon>
        <taxon>Euteleostomi</taxon>
        <taxon>Mammalia</taxon>
        <taxon>Eutheria</taxon>
        <taxon>Euarchontoglires</taxon>
        <taxon>Primates</taxon>
        <taxon>Haplorrhini</taxon>
        <taxon>Catarrhini</taxon>
        <taxon>Hominidae</taxon>
        <taxon>Homo</taxon>
    </lineage>
</organism>
<protein>
    <recommendedName>
        <fullName>Latexin</fullName>
    </recommendedName>
    <alternativeName>
        <fullName>Endogenous carboxypeptidase inhibitor</fullName>
        <shortName>ECI</shortName>
    </alternativeName>
    <alternativeName>
        <fullName>Protein MUM</fullName>
    </alternativeName>
    <alternativeName>
        <fullName>Tissue carboxypeptidase inhibitor</fullName>
        <shortName>TCI</shortName>
    </alternativeName>
</protein>
<keyword id="KW-0002">3D-structure</keyword>
<keyword id="KW-0007">Acetylation</keyword>
<keyword id="KW-0963">Cytoplasm</keyword>
<keyword id="KW-0358">Heparin-binding</keyword>
<keyword id="KW-0395">Inflammatory response</keyword>
<keyword id="KW-0481">Metalloenzyme inhibitor</keyword>
<keyword id="KW-0483">Metalloprotease inhibitor</keyword>
<keyword id="KW-0646">Protease inhibitor</keyword>
<keyword id="KW-1267">Proteomics identification</keyword>
<keyword id="KW-1185">Reference proteome</keyword>
<keyword id="KW-0677">Repeat</keyword>